<gene>
    <name type="primary">Chmp4c</name>
</gene>
<reference key="1">
    <citation type="journal article" date="2005" name="Science">
        <title>The transcriptional landscape of the mammalian genome.</title>
        <authorList>
            <person name="Carninci P."/>
            <person name="Kasukawa T."/>
            <person name="Katayama S."/>
            <person name="Gough J."/>
            <person name="Frith M.C."/>
            <person name="Maeda N."/>
            <person name="Oyama R."/>
            <person name="Ravasi T."/>
            <person name="Lenhard B."/>
            <person name="Wells C."/>
            <person name="Kodzius R."/>
            <person name="Shimokawa K."/>
            <person name="Bajic V.B."/>
            <person name="Brenner S.E."/>
            <person name="Batalov S."/>
            <person name="Forrest A.R."/>
            <person name="Zavolan M."/>
            <person name="Davis M.J."/>
            <person name="Wilming L.G."/>
            <person name="Aidinis V."/>
            <person name="Allen J.E."/>
            <person name="Ambesi-Impiombato A."/>
            <person name="Apweiler R."/>
            <person name="Aturaliya R.N."/>
            <person name="Bailey T.L."/>
            <person name="Bansal M."/>
            <person name="Baxter L."/>
            <person name="Beisel K.W."/>
            <person name="Bersano T."/>
            <person name="Bono H."/>
            <person name="Chalk A.M."/>
            <person name="Chiu K.P."/>
            <person name="Choudhary V."/>
            <person name="Christoffels A."/>
            <person name="Clutterbuck D.R."/>
            <person name="Crowe M.L."/>
            <person name="Dalla E."/>
            <person name="Dalrymple B.P."/>
            <person name="de Bono B."/>
            <person name="Della Gatta G."/>
            <person name="di Bernardo D."/>
            <person name="Down T."/>
            <person name="Engstrom P."/>
            <person name="Fagiolini M."/>
            <person name="Faulkner G."/>
            <person name="Fletcher C.F."/>
            <person name="Fukushima T."/>
            <person name="Furuno M."/>
            <person name="Futaki S."/>
            <person name="Gariboldi M."/>
            <person name="Georgii-Hemming P."/>
            <person name="Gingeras T.R."/>
            <person name="Gojobori T."/>
            <person name="Green R.E."/>
            <person name="Gustincich S."/>
            <person name="Harbers M."/>
            <person name="Hayashi Y."/>
            <person name="Hensch T.K."/>
            <person name="Hirokawa N."/>
            <person name="Hill D."/>
            <person name="Huminiecki L."/>
            <person name="Iacono M."/>
            <person name="Ikeo K."/>
            <person name="Iwama A."/>
            <person name="Ishikawa T."/>
            <person name="Jakt M."/>
            <person name="Kanapin A."/>
            <person name="Katoh M."/>
            <person name="Kawasawa Y."/>
            <person name="Kelso J."/>
            <person name="Kitamura H."/>
            <person name="Kitano H."/>
            <person name="Kollias G."/>
            <person name="Krishnan S.P."/>
            <person name="Kruger A."/>
            <person name="Kummerfeld S.K."/>
            <person name="Kurochkin I.V."/>
            <person name="Lareau L.F."/>
            <person name="Lazarevic D."/>
            <person name="Lipovich L."/>
            <person name="Liu J."/>
            <person name="Liuni S."/>
            <person name="McWilliam S."/>
            <person name="Madan Babu M."/>
            <person name="Madera M."/>
            <person name="Marchionni L."/>
            <person name="Matsuda H."/>
            <person name="Matsuzawa S."/>
            <person name="Miki H."/>
            <person name="Mignone F."/>
            <person name="Miyake S."/>
            <person name="Morris K."/>
            <person name="Mottagui-Tabar S."/>
            <person name="Mulder N."/>
            <person name="Nakano N."/>
            <person name="Nakauchi H."/>
            <person name="Ng P."/>
            <person name="Nilsson R."/>
            <person name="Nishiguchi S."/>
            <person name="Nishikawa S."/>
            <person name="Nori F."/>
            <person name="Ohara O."/>
            <person name="Okazaki Y."/>
            <person name="Orlando V."/>
            <person name="Pang K.C."/>
            <person name="Pavan W.J."/>
            <person name="Pavesi G."/>
            <person name="Pesole G."/>
            <person name="Petrovsky N."/>
            <person name="Piazza S."/>
            <person name="Reed J."/>
            <person name="Reid J.F."/>
            <person name="Ring B.Z."/>
            <person name="Ringwald M."/>
            <person name="Rost B."/>
            <person name="Ruan Y."/>
            <person name="Salzberg S.L."/>
            <person name="Sandelin A."/>
            <person name="Schneider C."/>
            <person name="Schoenbach C."/>
            <person name="Sekiguchi K."/>
            <person name="Semple C.A."/>
            <person name="Seno S."/>
            <person name="Sessa L."/>
            <person name="Sheng Y."/>
            <person name="Shibata Y."/>
            <person name="Shimada H."/>
            <person name="Shimada K."/>
            <person name="Silva D."/>
            <person name="Sinclair B."/>
            <person name="Sperling S."/>
            <person name="Stupka E."/>
            <person name="Sugiura K."/>
            <person name="Sultana R."/>
            <person name="Takenaka Y."/>
            <person name="Taki K."/>
            <person name="Tammoja K."/>
            <person name="Tan S.L."/>
            <person name="Tang S."/>
            <person name="Taylor M.S."/>
            <person name="Tegner J."/>
            <person name="Teichmann S.A."/>
            <person name="Ueda H.R."/>
            <person name="van Nimwegen E."/>
            <person name="Verardo R."/>
            <person name="Wei C.L."/>
            <person name="Yagi K."/>
            <person name="Yamanishi H."/>
            <person name="Zabarovsky E."/>
            <person name="Zhu S."/>
            <person name="Zimmer A."/>
            <person name="Hide W."/>
            <person name="Bult C."/>
            <person name="Grimmond S.M."/>
            <person name="Teasdale R.D."/>
            <person name="Liu E.T."/>
            <person name="Brusic V."/>
            <person name="Quackenbush J."/>
            <person name="Wahlestedt C."/>
            <person name="Mattick J.S."/>
            <person name="Hume D.A."/>
            <person name="Kai C."/>
            <person name="Sasaki D."/>
            <person name="Tomaru Y."/>
            <person name="Fukuda S."/>
            <person name="Kanamori-Katayama M."/>
            <person name="Suzuki M."/>
            <person name="Aoki J."/>
            <person name="Arakawa T."/>
            <person name="Iida J."/>
            <person name="Imamura K."/>
            <person name="Itoh M."/>
            <person name="Kato T."/>
            <person name="Kawaji H."/>
            <person name="Kawagashira N."/>
            <person name="Kawashima T."/>
            <person name="Kojima M."/>
            <person name="Kondo S."/>
            <person name="Konno H."/>
            <person name="Nakano K."/>
            <person name="Ninomiya N."/>
            <person name="Nishio T."/>
            <person name="Okada M."/>
            <person name="Plessy C."/>
            <person name="Shibata K."/>
            <person name="Shiraki T."/>
            <person name="Suzuki S."/>
            <person name="Tagami M."/>
            <person name="Waki K."/>
            <person name="Watahiki A."/>
            <person name="Okamura-Oho Y."/>
            <person name="Suzuki H."/>
            <person name="Kawai J."/>
            <person name="Hayashizaki Y."/>
        </authorList>
    </citation>
    <scope>NUCLEOTIDE SEQUENCE [LARGE SCALE MRNA]</scope>
    <source>
        <strain>C57BL/6J</strain>
        <tissue>Tongue</tissue>
    </source>
</reference>
<reference key="2">
    <citation type="journal article" date="2004" name="Genome Res.">
        <title>The status, quality, and expansion of the NIH full-length cDNA project: the Mammalian Gene Collection (MGC).</title>
        <authorList>
            <consortium name="The MGC Project Team"/>
        </authorList>
    </citation>
    <scope>NUCLEOTIDE SEQUENCE [LARGE SCALE MRNA]</scope>
</reference>
<comment type="function">
    <text evidence="2">Probable core component of the endosomal sorting required for transport complex III (ESCRT-III) which is involved in multivesicular bodies (MVBs) formation and sorting of endosomal cargo proteins into MVBs. MVBs contain intraluminal vesicles (ILVs) that are generated by invagination and scission from the limiting membrane of the endosome and mostly are delivered to lysosomes enabling degradation of membrane proteins, such as stimulated growth factor receptors, lysosomal enzymes and lipids. The MVB pathway appears to require the sequential function of ESCRT-O, -I,-II and -III complexes. ESCRT-III proteins mostly dissociate from the invaginating membrane before the ILV is released. The ESCRT machinery also functions in topologically equivalent membrane fission events, such as the terminal stages of cytokinesis. Key component of the cytokinesis checkpoint, a process required to delay abscission to prevent both premature resolution of intercellular chromosome bridges and accumulation of DNA damage: upon phosphorylation by AURKB, together with ZFYVE19/ANCHR, retains abscission-competent VPS4 (VPS4A and/or VPS4B) at the midbody ring until abscission checkpoint signaling is terminated at late cytokinesis. Deactivation of AURKB results in dephosphorylation of CHMP4C followed by its dissociation from ANCHR and VPS4 and subsequent abscission. ESCRT-III proteins are believed to mediate the necessary vesicle extrusion and/or membrane fission activities, possibly in conjunction with the AAA ATPase VPS4. CHMP4A/B/C are required for the exosomal release of SDCBP, CD63 and syndecan (By similarity).</text>
</comment>
<comment type="subunit">
    <text evidence="2">Probable core component of the endosomal sorting required for transport complex III (ESCRT-III). ESCRT-III components are thought to multimerize to form a flat lattice on the perimeter membrane of the endosome. Several assembly forms of ESCRT-III may exist that interact and act sequentially. Self-associates. Interacts with CHMP2A. Interacts with CHMP4A. Interacts with CHMP4B. Interacts with CHMP6. Interacts with VPS4A. Interacts with PDCD6IP; the interaction is direct (By similarity).</text>
</comment>
<comment type="subcellular location">
    <subcellularLocation>
        <location evidence="1">Cytoplasm</location>
        <location evidence="1">Cytosol</location>
    </subcellularLocation>
    <subcellularLocation>
        <location evidence="2">Late endosome membrane</location>
        <topology evidence="2">Peripheral membrane protein</topology>
    </subcellularLocation>
    <subcellularLocation>
        <location evidence="2">Midbody</location>
        <location evidence="2">Midbody ring</location>
    </subcellularLocation>
    <text evidence="2">Localizes to the midbody during late cytokinesis. During its recruitment, localizes initially to the midbody arms, before being directed to the central region, the midbody ring, also called Flemming body. Phosphorylation at Ser-210 by AURKB triggers localization to midbody ring.</text>
</comment>
<comment type="domain">
    <text evidence="1">The acidic C-terminus and the basic N-terminus are thought to render the protein in a closed, soluble and inactive conformation through an autoinhibitory intramolecular interaction. The open and active conformation, which enables membrane binding and oligomerization, is achieved by interaction with other cellular binding partners, probably including other ESCRT components (By similarity).</text>
</comment>
<comment type="PTM">
    <text evidence="2">Phosphorylated at Ser-210 by AURKB during cytokinesis: together with ZFYVE19/ANCHR, phosphorylated CHMP4C retains abscission-competent VPS4 (VPS4A and/or VPS4B) at the midbody ring until abscission checkpoint signaling is terminated at late cytokinesis.</text>
</comment>
<comment type="similarity">
    <text evidence="5">Belongs to the SNF7 family.</text>
</comment>
<accession>Q9D7F7</accession>
<accession>Q149R2</accession>
<accession>Q3TVD7</accession>
<accession>Q9CWH8</accession>
<feature type="chain" id="PRO_0000211496" description="Charged multivesicular body protein 4c">
    <location>
        <begin position="1"/>
        <end position="232"/>
    </location>
</feature>
<feature type="region of interest" description="Intramolecular interaction with C-terminus" evidence="1">
    <location>
        <begin position="1"/>
        <end position="153"/>
    </location>
</feature>
<feature type="region of interest" description="Disordered" evidence="4">
    <location>
        <begin position="1"/>
        <end position="23"/>
    </location>
</feature>
<feature type="region of interest" description="Intramolecular interaction with N-terminus" evidence="1">
    <location>
        <begin position="154"/>
        <end position="232"/>
    </location>
</feature>
<feature type="region of interest" description="Disordered" evidence="4">
    <location>
        <begin position="177"/>
        <end position="232"/>
    </location>
</feature>
<feature type="coiled-coil region" evidence="3">
    <location>
        <begin position="21"/>
        <end position="45"/>
    </location>
</feature>
<feature type="coiled-coil region" evidence="3">
    <location>
        <begin position="125"/>
        <end position="185"/>
    </location>
</feature>
<feature type="modified residue" description="Phosphoserine; by AURKB" evidence="2">
    <location>
        <position position="210"/>
    </location>
</feature>
<feature type="sequence conflict" description="In Ref. 1; BAB27133." evidence="5" ref="1">
    <original>T</original>
    <variation>I</variation>
    <location>
        <position position="88"/>
    </location>
</feature>
<protein>
    <recommendedName>
        <fullName>Charged multivesicular body protein 4c</fullName>
    </recommendedName>
    <alternativeName>
        <fullName>Chromatin-modifying protein 4c</fullName>
        <shortName>CHMP4c</shortName>
    </alternativeName>
</protein>
<name>CHM4C_MOUSE</name>
<proteinExistence type="evidence at transcript level"/>
<dbReference type="EMBL" id="AK009273">
    <property type="protein sequence ID" value="BAB26186.1"/>
    <property type="molecule type" value="mRNA"/>
</dbReference>
<dbReference type="EMBL" id="AK010707">
    <property type="protein sequence ID" value="BAB27133.1"/>
    <property type="molecule type" value="mRNA"/>
</dbReference>
<dbReference type="EMBL" id="AK160189">
    <property type="protein sequence ID" value="BAE35682.1"/>
    <property type="molecule type" value="mRNA"/>
</dbReference>
<dbReference type="EMBL" id="BC115983">
    <property type="protein sequence ID" value="AAI15984.1"/>
    <property type="molecule type" value="mRNA"/>
</dbReference>
<dbReference type="EMBL" id="BC117538">
    <property type="protein sequence ID" value="AAI17539.1"/>
    <property type="molecule type" value="mRNA"/>
</dbReference>
<dbReference type="CCDS" id="CCDS17243.1"/>
<dbReference type="RefSeq" id="NP_079795.1">
    <property type="nucleotide sequence ID" value="NM_025519.2"/>
</dbReference>
<dbReference type="SMR" id="Q9D7F7"/>
<dbReference type="BioGRID" id="211421">
    <property type="interactions" value="12"/>
</dbReference>
<dbReference type="ComplexPortal" id="CPX-332">
    <property type="entry name" value="ESCRT-III complex, variant Chmp1b1"/>
</dbReference>
<dbReference type="ComplexPortal" id="CPX-333">
    <property type="entry name" value="ESCRT-III complex, variant Chmp1b2"/>
</dbReference>
<dbReference type="FunCoup" id="Q9D7F7">
    <property type="interactions" value="835"/>
</dbReference>
<dbReference type="IntAct" id="Q9D7F7">
    <property type="interactions" value="11"/>
</dbReference>
<dbReference type="STRING" id="10090.ENSMUSP00000029049"/>
<dbReference type="iPTMnet" id="Q9D7F7"/>
<dbReference type="PhosphoSitePlus" id="Q9D7F7"/>
<dbReference type="PaxDb" id="10090-ENSMUSP00000029049"/>
<dbReference type="PeptideAtlas" id="Q9D7F7"/>
<dbReference type="ProteomicsDB" id="283909"/>
<dbReference type="Antibodypedia" id="12567">
    <property type="antibodies" value="71 antibodies from 17 providers"/>
</dbReference>
<dbReference type="DNASU" id="66371"/>
<dbReference type="Ensembl" id="ENSMUST00000029049.7">
    <property type="protein sequence ID" value="ENSMUSP00000029049.6"/>
    <property type="gene ID" value="ENSMUSG00000027536.7"/>
</dbReference>
<dbReference type="GeneID" id="66371"/>
<dbReference type="KEGG" id="mmu:66371"/>
<dbReference type="UCSC" id="uc008opu.1">
    <property type="organism name" value="mouse"/>
</dbReference>
<dbReference type="AGR" id="MGI:1913621"/>
<dbReference type="CTD" id="92421"/>
<dbReference type="MGI" id="MGI:1913621">
    <property type="gene designation" value="Chmp4c"/>
</dbReference>
<dbReference type="VEuPathDB" id="HostDB:ENSMUSG00000027536"/>
<dbReference type="eggNOG" id="KOG1656">
    <property type="taxonomic scope" value="Eukaryota"/>
</dbReference>
<dbReference type="GeneTree" id="ENSGT00940000159257"/>
<dbReference type="HOGENOM" id="CLU_071097_0_1_1"/>
<dbReference type="InParanoid" id="Q9D7F7"/>
<dbReference type="OMA" id="DKIDDMM"/>
<dbReference type="OrthoDB" id="5592979at2759"/>
<dbReference type="PhylomeDB" id="Q9D7F7"/>
<dbReference type="TreeFam" id="TF314269"/>
<dbReference type="Reactome" id="R-MMU-1632852">
    <property type="pathway name" value="Macroautophagy"/>
</dbReference>
<dbReference type="Reactome" id="R-MMU-5620971">
    <property type="pathway name" value="Pyroptosis"/>
</dbReference>
<dbReference type="Reactome" id="R-MMU-917729">
    <property type="pathway name" value="Endosomal Sorting Complex Required For Transport (ESCRT)"/>
</dbReference>
<dbReference type="Reactome" id="R-MMU-9668328">
    <property type="pathway name" value="Sealing of the nuclear envelope (NE) by ESCRT-III"/>
</dbReference>
<dbReference type="BioGRID-ORCS" id="66371">
    <property type="hits" value="3 hits in 81 CRISPR screens"/>
</dbReference>
<dbReference type="ChiTaRS" id="Chmp4c">
    <property type="organism name" value="mouse"/>
</dbReference>
<dbReference type="PRO" id="PR:Q9D7F7"/>
<dbReference type="Proteomes" id="UP000000589">
    <property type="component" value="Chromosome 3"/>
</dbReference>
<dbReference type="RNAct" id="Q9D7F7">
    <property type="molecule type" value="protein"/>
</dbReference>
<dbReference type="Bgee" id="ENSMUSG00000027536">
    <property type="expression patterns" value="Expressed in dorsal pancreas and 128 other cell types or tissues"/>
</dbReference>
<dbReference type="ExpressionAtlas" id="Q9D7F7">
    <property type="expression patterns" value="baseline and differential"/>
</dbReference>
<dbReference type="GO" id="GO:1904930">
    <property type="term" value="C:amphisome membrane"/>
    <property type="evidence" value="ECO:0000266"/>
    <property type="project" value="ComplexPortal"/>
</dbReference>
<dbReference type="GO" id="GO:0000421">
    <property type="term" value="C:autophagosome membrane"/>
    <property type="evidence" value="ECO:0000266"/>
    <property type="project" value="ComplexPortal"/>
</dbReference>
<dbReference type="GO" id="GO:0005829">
    <property type="term" value="C:cytosol"/>
    <property type="evidence" value="ECO:0007669"/>
    <property type="project" value="UniProtKB-SubCell"/>
</dbReference>
<dbReference type="GO" id="GO:0090543">
    <property type="term" value="C:Flemming body"/>
    <property type="evidence" value="ECO:0007669"/>
    <property type="project" value="UniProtKB-SubCell"/>
</dbReference>
<dbReference type="GO" id="GO:0000776">
    <property type="term" value="C:kinetochore"/>
    <property type="evidence" value="ECO:0000266"/>
    <property type="project" value="ComplexPortal"/>
</dbReference>
<dbReference type="GO" id="GO:0005828">
    <property type="term" value="C:kinetochore microtubule"/>
    <property type="evidence" value="ECO:0000266"/>
    <property type="project" value="ComplexPortal"/>
</dbReference>
<dbReference type="GO" id="GO:0005765">
    <property type="term" value="C:lysosomal membrane"/>
    <property type="evidence" value="ECO:0000266"/>
    <property type="project" value="ComplexPortal"/>
</dbReference>
<dbReference type="GO" id="GO:0030496">
    <property type="term" value="C:midbody"/>
    <property type="evidence" value="ECO:0000266"/>
    <property type="project" value="ComplexPortal"/>
</dbReference>
<dbReference type="GO" id="GO:0032585">
    <property type="term" value="C:multivesicular body membrane"/>
    <property type="evidence" value="ECO:0000266"/>
    <property type="project" value="ComplexPortal"/>
</dbReference>
<dbReference type="GO" id="GO:0005643">
    <property type="term" value="C:nuclear pore"/>
    <property type="evidence" value="ECO:0000266"/>
    <property type="project" value="ComplexPortal"/>
</dbReference>
<dbReference type="GO" id="GO:0005886">
    <property type="term" value="C:plasma membrane"/>
    <property type="evidence" value="ECO:0000266"/>
    <property type="project" value="ComplexPortal"/>
</dbReference>
<dbReference type="GO" id="GO:0042803">
    <property type="term" value="F:protein homodimerization activity"/>
    <property type="evidence" value="ECO:0007669"/>
    <property type="project" value="Ensembl"/>
</dbReference>
<dbReference type="GO" id="GO:0097352">
    <property type="term" value="P:autophagosome maturation"/>
    <property type="evidence" value="ECO:0000266"/>
    <property type="project" value="ComplexPortal"/>
</dbReference>
<dbReference type="GO" id="GO:0006914">
    <property type="term" value="P:autophagy"/>
    <property type="evidence" value="ECO:0000266"/>
    <property type="project" value="ComplexPortal"/>
</dbReference>
<dbReference type="GO" id="GO:1902774">
    <property type="term" value="P:late endosome to lysosome transport"/>
    <property type="evidence" value="ECO:0000266"/>
    <property type="project" value="ComplexPortal"/>
</dbReference>
<dbReference type="GO" id="GO:0090148">
    <property type="term" value="P:membrane fission"/>
    <property type="evidence" value="ECO:0000303"/>
    <property type="project" value="ComplexPortal"/>
</dbReference>
<dbReference type="GO" id="GO:0061952">
    <property type="term" value="P:midbody abscission"/>
    <property type="evidence" value="ECO:0000250"/>
    <property type="project" value="UniProtKB"/>
</dbReference>
<dbReference type="GO" id="GO:0044878">
    <property type="term" value="P:mitotic cytokinesis checkpoint signaling"/>
    <property type="evidence" value="ECO:0000250"/>
    <property type="project" value="UniProtKB"/>
</dbReference>
<dbReference type="GO" id="GO:0007080">
    <property type="term" value="P:mitotic metaphase chromosome alignment"/>
    <property type="evidence" value="ECO:0000266"/>
    <property type="project" value="ComplexPortal"/>
</dbReference>
<dbReference type="GO" id="GO:0036258">
    <property type="term" value="P:multivesicular body assembly"/>
    <property type="evidence" value="ECO:0000303"/>
    <property type="project" value="ComplexPortal"/>
</dbReference>
<dbReference type="GO" id="GO:0071985">
    <property type="term" value="P:multivesicular body sorting pathway"/>
    <property type="evidence" value="ECO:0000266"/>
    <property type="project" value="ComplexPortal"/>
</dbReference>
<dbReference type="GO" id="GO:0061763">
    <property type="term" value="P:multivesicular body-lysosome fusion"/>
    <property type="evidence" value="ECO:0000303"/>
    <property type="project" value="ComplexPortal"/>
</dbReference>
<dbReference type="GO" id="GO:0032466">
    <property type="term" value="P:negative regulation of cytokinesis"/>
    <property type="evidence" value="ECO:0000250"/>
    <property type="project" value="UniProtKB"/>
</dbReference>
<dbReference type="GO" id="GO:0031468">
    <property type="term" value="P:nuclear membrane reassembly"/>
    <property type="evidence" value="ECO:0000266"/>
    <property type="project" value="ComplexPortal"/>
</dbReference>
<dbReference type="GO" id="GO:0006997">
    <property type="term" value="P:nucleus organization"/>
    <property type="evidence" value="ECO:0000266"/>
    <property type="project" value="ComplexPortal"/>
</dbReference>
<dbReference type="GO" id="GO:0001778">
    <property type="term" value="P:plasma membrane repair"/>
    <property type="evidence" value="ECO:0000266"/>
    <property type="project" value="ComplexPortal"/>
</dbReference>
<dbReference type="GO" id="GO:0015031">
    <property type="term" value="P:protein transport"/>
    <property type="evidence" value="ECO:0007669"/>
    <property type="project" value="UniProtKB-KW"/>
</dbReference>
<dbReference type="GO" id="GO:0010824">
    <property type="term" value="P:regulation of centrosome duplication"/>
    <property type="evidence" value="ECO:0007669"/>
    <property type="project" value="Ensembl"/>
</dbReference>
<dbReference type="GO" id="GO:1901673">
    <property type="term" value="P:regulation of mitotic spindle assembly"/>
    <property type="evidence" value="ECO:0000266"/>
    <property type="project" value="ComplexPortal"/>
</dbReference>
<dbReference type="GO" id="GO:0043162">
    <property type="term" value="P:ubiquitin-dependent protein catabolic process via the multivesicular body sorting pathway"/>
    <property type="evidence" value="ECO:0000266"/>
    <property type="project" value="ComplexPortal"/>
</dbReference>
<dbReference type="GO" id="GO:0090611">
    <property type="term" value="P:ubiquitin-independent protein catabolic process via the multivesicular body sorting pathway"/>
    <property type="evidence" value="ECO:0007669"/>
    <property type="project" value="Ensembl"/>
</dbReference>
<dbReference type="GO" id="GO:0051469">
    <property type="term" value="P:vesicle fusion with vacuole"/>
    <property type="evidence" value="ECO:0000303"/>
    <property type="project" value="ComplexPortal"/>
</dbReference>
<dbReference type="GO" id="GO:0046761">
    <property type="term" value="P:viral budding from plasma membrane"/>
    <property type="evidence" value="ECO:0000266"/>
    <property type="project" value="ComplexPortal"/>
</dbReference>
<dbReference type="GO" id="GO:0039702">
    <property type="term" value="P:viral budding via host ESCRT complex"/>
    <property type="evidence" value="ECO:0000266"/>
    <property type="project" value="ComplexPortal"/>
</dbReference>
<dbReference type="FunFam" id="1.10.287.1060:FF:000001">
    <property type="entry name" value="Charged multivesicular body protein 4b"/>
    <property type="match status" value="1"/>
</dbReference>
<dbReference type="Gene3D" id="6.10.250.1710">
    <property type="match status" value="1"/>
</dbReference>
<dbReference type="Gene3D" id="1.10.287.1060">
    <property type="entry name" value="ESAT-6-like"/>
    <property type="match status" value="1"/>
</dbReference>
<dbReference type="InterPro" id="IPR005024">
    <property type="entry name" value="Snf7_fam"/>
</dbReference>
<dbReference type="PANTHER" id="PTHR22761">
    <property type="entry name" value="CHARGED MULTIVESICULAR BODY PROTEIN"/>
    <property type="match status" value="1"/>
</dbReference>
<dbReference type="PANTHER" id="PTHR22761:SF77">
    <property type="entry name" value="CHARGED MULTIVESICULAR BODY PROTEIN 4C"/>
    <property type="match status" value="1"/>
</dbReference>
<dbReference type="Pfam" id="PF03357">
    <property type="entry name" value="Snf7"/>
    <property type="match status" value="1"/>
</dbReference>
<sequence length="232" mass="26280">MSKLGKFFKGTRSSRARAAPSAQEALARLRETEEMLAKKQEYLENRIQRELALAKKHGSQNKRAALQALKRKKRFEKQLTQVDGTLSTIEFQREALENSHTNTEVLRNMGFAAKAMKAVHDNMDLNKIDDLMQDITEQQDIAQEISEAFSQRVQFADGFDEAELLAELEELEQEELNKKMTSLELPNVPSSSLPAQPSRKASMPSSVHRSRAASSRRAEEDDDFKQLAAWAT</sequence>
<organism>
    <name type="scientific">Mus musculus</name>
    <name type="common">Mouse</name>
    <dbReference type="NCBI Taxonomy" id="10090"/>
    <lineage>
        <taxon>Eukaryota</taxon>
        <taxon>Metazoa</taxon>
        <taxon>Chordata</taxon>
        <taxon>Craniata</taxon>
        <taxon>Vertebrata</taxon>
        <taxon>Euteleostomi</taxon>
        <taxon>Mammalia</taxon>
        <taxon>Eutheria</taxon>
        <taxon>Euarchontoglires</taxon>
        <taxon>Glires</taxon>
        <taxon>Rodentia</taxon>
        <taxon>Myomorpha</taxon>
        <taxon>Muroidea</taxon>
        <taxon>Muridae</taxon>
        <taxon>Murinae</taxon>
        <taxon>Mus</taxon>
        <taxon>Mus</taxon>
    </lineage>
</organism>
<keyword id="KW-0175">Coiled coil</keyword>
<keyword id="KW-0963">Cytoplasm</keyword>
<keyword id="KW-0967">Endosome</keyword>
<keyword id="KW-0472">Membrane</keyword>
<keyword id="KW-0597">Phosphoprotein</keyword>
<keyword id="KW-0653">Protein transport</keyword>
<keyword id="KW-1185">Reference proteome</keyword>
<keyword id="KW-0813">Transport</keyword>
<evidence type="ECO:0000250" key="1"/>
<evidence type="ECO:0000250" key="2">
    <source>
        <dbReference type="UniProtKB" id="Q96CF2"/>
    </source>
</evidence>
<evidence type="ECO:0000255" key="3"/>
<evidence type="ECO:0000256" key="4">
    <source>
        <dbReference type="SAM" id="MobiDB-lite"/>
    </source>
</evidence>
<evidence type="ECO:0000305" key="5"/>